<accession>Q7M0V7</accession>
<protein>
    <recommendedName>
        <fullName>Enolase</fullName>
        <ecNumber>4.2.1.11</ecNumber>
    </recommendedName>
    <alternativeName>
        <fullName>2-phospho-D-glycerate hydro-lyase</fullName>
    </alternativeName>
    <alternativeName>
        <fullName>2-phosphoglycerate dehydratase</fullName>
    </alternativeName>
</protein>
<sequence length="57" mass="6042">MGAEVFHSLKKVLGEKGLASGVGDEGGFAPNLGSNIRRAGYTAVISHRVAKYNQLLR</sequence>
<name>ENO_CLODI</name>
<keyword id="KW-0963">Cytoplasm</keyword>
<keyword id="KW-0903">Direct protein sequencing</keyword>
<keyword id="KW-0324">Glycolysis</keyword>
<keyword id="KW-0456">Lyase</keyword>
<keyword id="KW-0460">Magnesium</keyword>
<keyword id="KW-0479">Metal-binding</keyword>
<keyword id="KW-0964">Secreted</keyword>
<comment type="function">
    <text evidence="3">Catalyzes the reversible conversion of 2-phosphoglycerate (2-PG) into phosphoenolpyruvate (PEP). It is essential for the degradation of carbohydrates via glycolysis.</text>
</comment>
<comment type="catalytic activity">
    <reaction evidence="3">
        <text>(2R)-2-phosphoglycerate = phosphoenolpyruvate + H2O</text>
        <dbReference type="Rhea" id="RHEA:10164"/>
        <dbReference type="ChEBI" id="CHEBI:15377"/>
        <dbReference type="ChEBI" id="CHEBI:58289"/>
        <dbReference type="ChEBI" id="CHEBI:58702"/>
        <dbReference type="EC" id="4.2.1.11"/>
    </reaction>
</comment>
<comment type="cofactor">
    <cofactor evidence="3">
        <name>Mg(2+)</name>
        <dbReference type="ChEBI" id="CHEBI:18420"/>
    </cofactor>
    <text evidence="3">Binds a second Mg(2+) ion via substrate during catalysis.</text>
</comment>
<comment type="pathway">
    <text>Carbohydrate degradation; glycolysis; pyruvate from D-glyceraldehyde 3-phosphate: step 4/5.</text>
</comment>
<comment type="subcellular location">
    <subcellularLocation>
        <location evidence="3">Cytoplasm</location>
    </subcellularLocation>
    <subcellularLocation>
        <location evidence="3">Secreted</location>
    </subcellularLocation>
    <subcellularLocation>
        <location evidence="3">Cell surface</location>
    </subcellularLocation>
    <text evidence="1 3">Fractions of enolase are present in both the cytoplasm and on the cell surface (By similarity).</text>
</comment>
<comment type="similarity">
    <text evidence="4">Belongs to the enolase family.</text>
</comment>
<reference evidence="7" key="1">
    <citation type="journal article" date="1989" name="J. Chromatogr. A">
        <title>Clostridium difficile toxin B: characterization and sequence of three peptides.</title>
        <authorList>
            <person name="Bisseret F."/>
            <person name="Keith G."/>
            <person name="Rihn B."/>
            <person name="Amiri I."/>
            <person name="Werneburg B."/>
            <person name="Girardot R."/>
            <person name="Baldacini O."/>
            <person name="Green G."/>
            <person name="Nguyen V.K."/>
            <person name="Monteil H."/>
        </authorList>
    </citation>
    <scope>PROTEIN SEQUENCE</scope>
    <source>
        <strain evidence="5">68750</strain>
    </source>
</reference>
<dbReference type="EC" id="4.2.1.11"/>
<dbReference type="PIR" id="A61009">
    <property type="entry name" value="A61009"/>
</dbReference>
<dbReference type="SMR" id="Q7M0V7"/>
<dbReference type="UniPathway" id="UPA00109">
    <property type="reaction ID" value="UER00187"/>
</dbReference>
<dbReference type="GO" id="GO:0009986">
    <property type="term" value="C:cell surface"/>
    <property type="evidence" value="ECO:0007669"/>
    <property type="project" value="UniProtKB-SubCell"/>
</dbReference>
<dbReference type="GO" id="GO:0005737">
    <property type="term" value="C:cytoplasm"/>
    <property type="evidence" value="ECO:0007669"/>
    <property type="project" value="UniProtKB-SubCell"/>
</dbReference>
<dbReference type="GO" id="GO:0005576">
    <property type="term" value="C:extracellular region"/>
    <property type="evidence" value="ECO:0007669"/>
    <property type="project" value="UniProtKB-SubCell"/>
</dbReference>
<dbReference type="GO" id="GO:0046872">
    <property type="term" value="F:metal ion binding"/>
    <property type="evidence" value="ECO:0007669"/>
    <property type="project" value="UniProtKB-KW"/>
</dbReference>
<dbReference type="GO" id="GO:0004634">
    <property type="term" value="F:phosphopyruvate hydratase activity"/>
    <property type="evidence" value="ECO:0007669"/>
    <property type="project" value="UniProtKB-EC"/>
</dbReference>
<dbReference type="GO" id="GO:0006096">
    <property type="term" value="P:glycolytic process"/>
    <property type="evidence" value="ECO:0007669"/>
    <property type="project" value="UniProtKB-UniPathway"/>
</dbReference>
<dbReference type="Gene3D" id="3.20.20.120">
    <property type="entry name" value="Enolase-like C-terminal domain"/>
    <property type="match status" value="1"/>
</dbReference>
<dbReference type="InterPro" id="IPR036849">
    <property type="entry name" value="Enolase-like_C_sf"/>
</dbReference>
<dbReference type="InterPro" id="IPR020810">
    <property type="entry name" value="Enolase_C"/>
</dbReference>
<dbReference type="Pfam" id="PF00113">
    <property type="entry name" value="Enolase_C"/>
    <property type="match status" value="1"/>
</dbReference>
<dbReference type="SUPFAM" id="SSF51604">
    <property type="entry name" value="Enolase C-terminal domain-like"/>
    <property type="match status" value="1"/>
</dbReference>
<proteinExistence type="evidence at protein level"/>
<feature type="chain" id="PRO_0000284772" description="Enolase">
    <location>
        <begin position="1" status="less than"/>
        <end position="57" status="greater than"/>
    </location>
</feature>
<feature type="active site" description="Proton donor" evidence="2">
    <location>
        <position position="25"/>
    </location>
</feature>
<feature type="non-consecutive residues" evidence="6">
    <location>
        <begin position="38"/>
        <end position="39"/>
    </location>
</feature>
<feature type="non-consecutive residues" evidence="6">
    <location>
        <begin position="48"/>
        <end position="49"/>
    </location>
</feature>
<feature type="non-terminal residue" evidence="6">
    <location>
        <position position="1"/>
    </location>
</feature>
<feature type="non-terminal residue" evidence="7">
    <location>
        <position position="57"/>
    </location>
</feature>
<evidence type="ECO:0000250" key="1"/>
<evidence type="ECO:0000250" key="2">
    <source>
        <dbReference type="UniProtKB" id="P00924"/>
    </source>
</evidence>
<evidence type="ECO:0000250" key="3">
    <source>
        <dbReference type="UniProtKB" id="P0A6P9"/>
    </source>
</evidence>
<evidence type="ECO:0000255" key="4"/>
<evidence type="ECO:0000269" key="5">
    <source>
    </source>
</evidence>
<evidence type="ECO:0000303" key="6">
    <source>
    </source>
</evidence>
<evidence type="ECO:0000312" key="7">
    <source>
        <dbReference type="PIR" id="A61009"/>
    </source>
</evidence>
<organism>
    <name type="scientific">Clostridioides difficile</name>
    <name type="common">Peptoclostridium difficile</name>
    <dbReference type="NCBI Taxonomy" id="1496"/>
    <lineage>
        <taxon>Bacteria</taxon>
        <taxon>Bacillati</taxon>
        <taxon>Bacillota</taxon>
        <taxon>Clostridia</taxon>
        <taxon>Peptostreptococcales</taxon>
        <taxon>Peptostreptococcaceae</taxon>
        <taxon>Clostridioides</taxon>
    </lineage>
</organism>